<dbReference type="EMBL" id="AK144488">
    <property type="protein sequence ID" value="BAE25915.1"/>
    <property type="molecule type" value="mRNA"/>
</dbReference>
<dbReference type="EMBL" id="BC092540">
    <property type="protein sequence ID" value="AAH92540.1"/>
    <property type="molecule type" value="mRNA"/>
</dbReference>
<dbReference type="CCDS" id="CCDS17608.1"/>
<dbReference type="RefSeq" id="NP_001020012.1">
    <property type="nucleotide sequence ID" value="NM_001024841.3"/>
</dbReference>
<dbReference type="FunCoup" id="Q569E4">
    <property type="interactions" value="3"/>
</dbReference>
<dbReference type="STRING" id="10090.ENSMUSP00000088324"/>
<dbReference type="GlyGen" id="Q569E4">
    <property type="glycosylation" value="1 site"/>
</dbReference>
<dbReference type="PhosphoSitePlus" id="Q569E4"/>
<dbReference type="SwissPalm" id="Q569E4"/>
<dbReference type="PaxDb" id="10090-ENSMUSP00000088324"/>
<dbReference type="ProteomicsDB" id="295855"/>
<dbReference type="Antibodypedia" id="49641">
    <property type="antibodies" value="65 antibodies from 13 providers"/>
</dbReference>
<dbReference type="Ensembl" id="ENSMUST00000090815.6">
    <property type="protein sequence ID" value="ENSMUSP00000088324.6"/>
    <property type="gene ID" value="ENSMUSG00000068860.6"/>
</dbReference>
<dbReference type="GeneID" id="229588"/>
<dbReference type="KEGG" id="mmu:229588"/>
<dbReference type="UCSC" id="uc008qiw.1">
    <property type="organism name" value="mouse"/>
</dbReference>
<dbReference type="AGR" id="MGI:2684974"/>
<dbReference type="MGI" id="MGI:2684974">
    <property type="gene designation" value="Gm128"/>
</dbReference>
<dbReference type="VEuPathDB" id="HostDB:ENSMUSG00000068860"/>
<dbReference type="eggNOG" id="ENOG502SZ3R">
    <property type="taxonomic scope" value="Eukaryota"/>
</dbReference>
<dbReference type="GeneTree" id="ENSGT00390000014288"/>
<dbReference type="InParanoid" id="Q569E4"/>
<dbReference type="OMA" id="WHCHCRS"/>
<dbReference type="OrthoDB" id="9537043at2759"/>
<dbReference type="TreeFam" id="TF338845"/>
<dbReference type="BioGRID-ORCS" id="229588">
    <property type="hits" value="1 hit in 69 CRISPR screens"/>
</dbReference>
<dbReference type="ChiTaRS" id="Gm128">
    <property type="organism name" value="mouse"/>
</dbReference>
<dbReference type="PRO" id="PR:Q569E4"/>
<dbReference type="Proteomes" id="UP000000589">
    <property type="component" value="Chromosome 3"/>
</dbReference>
<dbReference type="RNAct" id="Q569E4">
    <property type="molecule type" value="protein"/>
</dbReference>
<dbReference type="Bgee" id="ENSMUSG00000068860">
    <property type="expression patterns" value="Expressed in spermatid and 33 other cell types or tissues"/>
</dbReference>
<dbReference type="ExpressionAtlas" id="Q569E4">
    <property type="expression patterns" value="baseline and differential"/>
</dbReference>
<dbReference type="GO" id="GO:0005576">
    <property type="term" value="C:extracellular region"/>
    <property type="evidence" value="ECO:0007669"/>
    <property type="project" value="UniProtKB-SubCell"/>
</dbReference>
<dbReference type="GO" id="GO:0042127">
    <property type="term" value="P:regulation of cell population proliferation"/>
    <property type="evidence" value="ECO:0000315"/>
    <property type="project" value="UniProtKB"/>
</dbReference>
<dbReference type="InterPro" id="IPR029292">
    <property type="entry name" value="MENT"/>
</dbReference>
<dbReference type="PANTHER" id="PTHR16240">
    <property type="entry name" value="PROTEIN MENT"/>
    <property type="match status" value="1"/>
</dbReference>
<dbReference type="PANTHER" id="PTHR16240:SF2">
    <property type="entry name" value="PROTEIN MENT"/>
    <property type="match status" value="1"/>
</dbReference>
<dbReference type="Pfam" id="PF15322">
    <property type="entry name" value="PMSI1"/>
    <property type="match status" value="1"/>
</dbReference>
<proteinExistence type="evidence at protein level"/>
<organism>
    <name type="scientific">Mus musculus</name>
    <name type="common">Mouse</name>
    <dbReference type="NCBI Taxonomy" id="10090"/>
    <lineage>
        <taxon>Eukaryota</taxon>
        <taxon>Metazoa</taxon>
        <taxon>Chordata</taxon>
        <taxon>Craniata</taxon>
        <taxon>Vertebrata</taxon>
        <taxon>Euteleostomi</taxon>
        <taxon>Mammalia</taxon>
        <taxon>Eutheria</taxon>
        <taxon>Euarchontoglires</taxon>
        <taxon>Glires</taxon>
        <taxon>Rodentia</taxon>
        <taxon>Myomorpha</taxon>
        <taxon>Muroidea</taxon>
        <taxon>Muridae</taxon>
        <taxon>Murinae</taxon>
        <taxon>Mus</taxon>
        <taxon>Mus</taxon>
    </lineage>
</organism>
<protein>
    <recommendedName>
        <fullName>Protein MENT</fullName>
    </recommendedName>
    <alternativeName>
        <fullName>Methylated in normal thymocytes protein</fullName>
    </alternativeName>
</protein>
<keyword id="KW-0597">Phosphoprotein</keyword>
<keyword id="KW-1185">Reference proteome</keyword>
<keyword id="KW-0964">Secreted</keyword>
<keyword id="KW-0732">Signal</keyword>
<name>MENT_MOUSE</name>
<comment type="function">
    <text evidence="3">Involved in control of cellular proliferation. Onconcogenic modifier contributing to the tumor suppressor function of DNMT3B.</text>
</comment>
<comment type="subcellular location">
    <subcellularLocation>
        <location evidence="5">Secreted</location>
    </subcellularLocation>
</comment>
<comment type="tissue specificity">
    <text evidence="3">High expression in testis, but low in other tissues.</text>
</comment>
<comment type="PTM">
    <text evidence="1">Phosphorylation sites are present in the extracellular medium.</text>
</comment>
<comment type="disruption phenotype">
    <text evidence="4">No visible phenotype. Mice lacking Ment are viable and have no overt fertility phenotype.</text>
</comment>
<gene>
    <name type="primary">Ment</name>
    <name type="synonym">Gm128</name>
</gene>
<sequence>MVPAACMLLWALLLSLEYRAAGAEDQTTTPTATTIGMQRVSFRFGGPARSLHSTNPTARTTVPGKLRVTLEDENDALATADRLALPAAAELLSTVTGYSRSSVPSPSDWEEDGSLEEGVVDTRKTTNGPVSLFSTTNTVGSSGTTGRFLANSQEREIKLTTDVRSLSSKTTVVDLSSESTLQQWSTPGSTPSPWLKPSFTAMPSPEDLRVVLMPWGPWHCHCKSGTMSRSRAGKLHGLSGRLRVGALNELRTEHRPCTYQLCACNRHLEECPLDSSLCSDHSCSSRAPFQSSTTSLVPVHLRRRPILPPTSPSPSPALAFWKRVRIGLEDIWNSLSSVFTETQPVERIQR</sequence>
<reference key="1">
    <citation type="journal article" date="2005" name="Science">
        <title>The transcriptional landscape of the mammalian genome.</title>
        <authorList>
            <person name="Carninci P."/>
            <person name="Kasukawa T."/>
            <person name="Katayama S."/>
            <person name="Gough J."/>
            <person name="Frith M.C."/>
            <person name="Maeda N."/>
            <person name="Oyama R."/>
            <person name="Ravasi T."/>
            <person name="Lenhard B."/>
            <person name="Wells C."/>
            <person name="Kodzius R."/>
            <person name="Shimokawa K."/>
            <person name="Bajic V.B."/>
            <person name="Brenner S.E."/>
            <person name="Batalov S."/>
            <person name="Forrest A.R."/>
            <person name="Zavolan M."/>
            <person name="Davis M.J."/>
            <person name="Wilming L.G."/>
            <person name="Aidinis V."/>
            <person name="Allen J.E."/>
            <person name="Ambesi-Impiombato A."/>
            <person name="Apweiler R."/>
            <person name="Aturaliya R.N."/>
            <person name="Bailey T.L."/>
            <person name="Bansal M."/>
            <person name="Baxter L."/>
            <person name="Beisel K.W."/>
            <person name="Bersano T."/>
            <person name="Bono H."/>
            <person name="Chalk A.M."/>
            <person name="Chiu K.P."/>
            <person name="Choudhary V."/>
            <person name="Christoffels A."/>
            <person name="Clutterbuck D.R."/>
            <person name="Crowe M.L."/>
            <person name="Dalla E."/>
            <person name="Dalrymple B.P."/>
            <person name="de Bono B."/>
            <person name="Della Gatta G."/>
            <person name="di Bernardo D."/>
            <person name="Down T."/>
            <person name="Engstrom P."/>
            <person name="Fagiolini M."/>
            <person name="Faulkner G."/>
            <person name="Fletcher C.F."/>
            <person name="Fukushima T."/>
            <person name="Furuno M."/>
            <person name="Futaki S."/>
            <person name="Gariboldi M."/>
            <person name="Georgii-Hemming P."/>
            <person name="Gingeras T.R."/>
            <person name="Gojobori T."/>
            <person name="Green R.E."/>
            <person name="Gustincich S."/>
            <person name="Harbers M."/>
            <person name="Hayashi Y."/>
            <person name="Hensch T.K."/>
            <person name="Hirokawa N."/>
            <person name="Hill D."/>
            <person name="Huminiecki L."/>
            <person name="Iacono M."/>
            <person name="Ikeo K."/>
            <person name="Iwama A."/>
            <person name="Ishikawa T."/>
            <person name="Jakt M."/>
            <person name="Kanapin A."/>
            <person name="Katoh M."/>
            <person name="Kawasawa Y."/>
            <person name="Kelso J."/>
            <person name="Kitamura H."/>
            <person name="Kitano H."/>
            <person name="Kollias G."/>
            <person name="Krishnan S.P."/>
            <person name="Kruger A."/>
            <person name="Kummerfeld S.K."/>
            <person name="Kurochkin I.V."/>
            <person name="Lareau L.F."/>
            <person name="Lazarevic D."/>
            <person name="Lipovich L."/>
            <person name="Liu J."/>
            <person name="Liuni S."/>
            <person name="McWilliam S."/>
            <person name="Madan Babu M."/>
            <person name="Madera M."/>
            <person name="Marchionni L."/>
            <person name="Matsuda H."/>
            <person name="Matsuzawa S."/>
            <person name="Miki H."/>
            <person name="Mignone F."/>
            <person name="Miyake S."/>
            <person name="Morris K."/>
            <person name="Mottagui-Tabar S."/>
            <person name="Mulder N."/>
            <person name="Nakano N."/>
            <person name="Nakauchi H."/>
            <person name="Ng P."/>
            <person name="Nilsson R."/>
            <person name="Nishiguchi S."/>
            <person name="Nishikawa S."/>
            <person name="Nori F."/>
            <person name="Ohara O."/>
            <person name="Okazaki Y."/>
            <person name="Orlando V."/>
            <person name="Pang K.C."/>
            <person name="Pavan W.J."/>
            <person name="Pavesi G."/>
            <person name="Pesole G."/>
            <person name="Petrovsky N."/>
            <person name="Piazza S."/>
            <person name="Reed J."/>
            <person name="Reid J.F."/>
            <person name="Ring B.Z."/>
            <person name="Ringwald M."/>
            <person name="Rost B."/>
            <person name="Ruan Y."/>
            <person name="Salzberg S.L."/>
            <person name="Sandelin A."/>
            <person name="Schneider C."/>
            <person name="Schoenbach C."/>
            <person name="Sekiguchi K."/>
            <person name="Semple C.A."/>
            <person name="Seno S."/>
            <person name="Sessa L."/>
            <person name="Sheng Y."/>
            <person name="Shibata Y."/>
            <person name="Shimada H."/>
            <person name="Shimada K."/>
            <person name="Silva D."/>
            <person name="Sinclair B."/>
            <person name="Sperling S."/>
            <person name="Stupka E."/>
            <person name="Sugiura K."/>
            <person name="Sultana R."/>
            <person name="Takenaka Y."/>
            <person name="Taki K."/>
            <person name="Tammoja K."/>
            <person name="Tan S.L."/>
            <person name="Tang S."/>
            <person name="Taylor M.S."/>
            <person name="Tegner J."/>
            <person name="Teichmann S.A."/>
            <person name="Ueda H.R."/>
            <person name="van Nimwegen E."/>
            <person name="Verardo R."/>
            <person name="Wei C.L."/>
            <person name="Yagi K."/>
            <person name="Yamanishi H."/>
            <person name="Zabarovsky E."/>
            <person name="Zhu S."/>
            <person name="Zimmer A."/>
            <person name="Hide W."/>
            <person name="Bult C."/>
            <person name="Grimmond S.M."/>
            <person name="Teasdale R.D."/>
            <person name="Liu E.T."/>
            <person name="Brusic V."/>
            <person name="Quackenbush J."/>
            <person name="Wahlestedt C."/>
            <person name="Mattick J.S."/>
            <person name="Hume D.A."/>
            <person name="Kai C."/>
            <person name="Sasaki D."/>
            <person name="Tomaru Y."/>
            <person name="Fukuda S."/>
            <person name="Kanamori-Katayama M."/>
            <person name="Suzuki M."/>
            <person name="Aoki J."/>
            <person name="Arakawa T."/>
            <person name="Iida J."/>
            <person name="Imamura K."/>
            <person name="Itoh M."/>
            <person name="Kato T."/>
            <person name="Kawaji H."/>
            <person name="Kawagashira N."/>
            <person name="Kawashima T."/>
            <person name="Kojima M."/>
            <person name="Kondo S."/>
            <person name="Konno H."/>
            <person name="Nakano K."/>
            <person name="Ninomiya N."/>
            <person name="Nishio T."/>
            <person name="Okada M."/>
            <person name="Plessy C."/>
            <person name="Shibata K."/>
            <person name="Shiraki T."/>
            <person name="Suzuki S."/>
            <person name="Tagami M."/>
            <person name="Waki K."/>
            <person name="Watahiki A."/>
            <person name="Okamura-Oho Y."/>
            <person name="Suzuki H."/>
            <person name="Kawai J."/>
            <person name="Hayashizaki Y."/>
        </authorList>
    </citation>
    <scope>NUCLEOTIDE SEQUENCE [LARGE SCALE MRNA]</scope>
    <source>
        <strain>C57BL/6J</strain>
        <tissue>Lung</tissue>
    </source>
</reference>
<reference key="2">
    <citation type="journal article" date="2004" name="Genome Res.">
        <title>The status, quality, and expansion of the NIH full-length cDNA project: the Mammalian Gene Collection (MGC).</title>
        <authorList>
            <consortium name="The MGC Project Team"/>
        </authorList>
    </citation>
    <scope>NUCLEOTIDE SEQUENCE [LARGE SCALE MRNA]</scope>
    <source>
        <tissue>Testis</tissue>
    </source>
</reference>
<reference key="3">
    <citation type="journal article" date="2010" name="Cell">
        <title>A tissue-specific atlas of mouse protein phosphorylation and expression.</title>
        <authorList>
            <person name="Huttlin E.L."/>
            <person name="Jedrychowski M.P."/>
            <person name="Elias J.E."/>
            <person name="Goswami T."/>
            <person name="Rad R."/>
            <person name="Beausoleil S.A."/>
            <person name="Villen J."/>
            <person name="Haas W."/>
            <person name="Sowa M.E."/>
            <person name="Gygi S.P."/>
        </authorList>
    </citation>
    <scope>IDENTIFICATION BY MASS SPECTROMETRY [LARGE SCALE ANALYSIS]</scope>
    <source>
        <tissue>Testis</tissue>
    </source>
</reference>
<reference key="4">
    <citation type="journal article" date="2012" name="J. Clin. Invest.">
        <title>Loss of Dnmt3b function upregulates the tumor modifier Ment and accelerates mouse lymphomagenesis.</title>
        <authorList>
            <person name="Hlady R.A."/>
            <person name="Novakova S."/>
            <person name="Opavska J."/>
            <person name="Klinkebiel D."/>
            <person name="Peters S.L."/>
            <person name="Bies J."/>
            <person name="Hannah J."/>
            <person name="Iqbal J."/>
            <person name="Anderson K.M."/>
            <person name="Siebler H.M."/>
            <person name="Smith L.M."/>
            <person name="Greiner T.C."/>
            <person name="Bastola D."/>
            <person name="Joshi S."/>
            <person name="Lockridge O."/>
            <person name="Simpson M.A."/>
            <person name="Felsher D.W."/>
            <person name="Wagner K.U."/>
            <person name="Chan W.C."/>
            <person name="Christman J.K."/>
            <person name="Opavsky R."/>
        </authorList>
    </citation>
    <scope>TISSUE SPECIFICITY</scope>
    <scope>FUNCTION</scope>
</reference>
<reference key="5">
    <citation type="journal article" date="2012" name="Mol. Biol. Cell">
        <title>Mice expressing aberrant sperm-specific protein PMIS2 produce normal-looking but fertilization-incompetent spermatozoa.</title>
        <authorList>
            <person name="Yamaguchi R."/>
            <person name="Fujihara Y."/>
            <person name="Ikawa M."/>
            <person name="Okabe M."/>
        </authorList>
    </citation>
    <scope>DISRUPTION PHENOTYPE</scope>
</reference>
<evidence type="ECO:0000250" key="1"/>
<evidence type="ECO:0000255" key="2"/>
<evidence type="ECO:0000269" key="3">
    <source>
    </source>
</evidence>
<evidence type="ECO:0000269" key="4">
    <source>
    </source>
</evidence>
<evidence type="ECO:0000305" key="5"/>
<accession>Q569E4</accession>
<feature type="signal peptide" evidence="2">
    <location>
        <begin position="1"/>
        <end position="23"/>
    </location>
</feature>
<feature type="chain" id="PRO_0000304970" description="Protein MENT">
    <location>
        <begin position="24"/>
        <end position="350"/>
    </location>
</feature>